<comment type="function">
    <text evidence="1 2">Substrate-recognition component of the SCF(FBXO31) protein ligase complex, which specifically mediates the ubiquitination of proteins amidated at their C-terminus in response to oxidative stress, leading to their degradation by the proteasome. Fbxo31 specifically recognizes and binds C-terminal peptides bearing an amide: C-terminal amidation in response to oxidative stress takes place following protein fragmentation. The SCF(FBXO31) also plays a role in G1 arrest following DNA damage by mediating ubiquitination of phosphorylated cyclin-D1 (ccnd1), promoting its degradation by the proteasome, resulting in G1 arrest (By similarity). The SCF(FBXO31) complex is however not a major regulator of ccnd1 stability during the G1/S transition (By similarity).</text>
</comment>
<comment type="pathway">
    <text evidence="2">Protein modification; protein ubiquitination.</text>
</comment>
<comment type="subunit">
    <text evidence="2">Part of a SCF (SKP1-cullin-F-box) protein ligase complex SCF(FBXO31).</text>
</comment>
<comment type="subcellular location">
    <subcellularLocation>
        <location evidence="2">Cytoplasm</location>
    </subcellularLocation>
</comment>
<comment type="domain">
    <text evidence="2">Zinc-binding is required for the structure of the protein and facilitate folding.</text>
</comment>
<comment type="similarity">
    <text evidence="5">Belongs to the FBXO31 family.</text>
</comment>
<protein>
    <recommendedName>
        <fullName>F-box only protein 31-B</fullName>
    </recommendedName>
</protein>
<proteinExistence type="evidence at transcript level"/>
<feature type="chain" id="PRO_0000378165" description="F-box only protein 31-B">
    <location>
        <begin position="1"/>
        <end position="523"/>
    </location>
</feature>
<feature type="domain" description="F-box" evidence="3">
    <location>
        <begin position="59"/>
        <end position="105"/>
    </location>
</feature>
<feature type="region of interest" description="Disordered" evidence="4">
    <location>
        <begin position="372"/>
        <end position="427"/>
    </location>
</feature>
<feature type="compositionally biased region" description="Basic and acidic residues" evidence="4">
    <location>
        <begin position="386"/>
        <end position="396"/>
    </location>
</feature>
<feature type="compositionally biased region" description="Basic and acidic residues" evidence="4">
    <location>
        <begin position="406"/>
        <end position="423"/>
    </location>
</feature>
<feature type="binding site" evidence="2">
    <location>
        <position position="201"/>
    </location>
    <ligand>
        <name>Zn(2+)</name>
        <dbReference type="ChEBI" id="CHEBI:29105"/>
    </ligand>
</feature>
<feature type="binding site" evidence="2">
    <location>
        <position position="209"/>
    </location>
    <ligand>
        <name>Zn(2+)</name>
        <dbReference type="ChEBI" id="CHEBI:29105"/>
    </ligand>
</feature>
<feature type="binding site" evidence="2">
    <location>
        <position position="225"/>
    </location>
    <ligand>
        <name>Zn(2+)</name>
        <dbReference type="ChEBI" id="CHEBI:29105"/>
    </ligand>
</feature>
<feature type="binding site" evidence="2">
    <location>
        <position position="231"/>
    </location>
    <ligand>
        <name>Zn(2+)</name>
        <dbReference type="ChEBI" id="CHEBI:29105"/>
    </ligand>
</feature>
<name>FB31B_XENLA</name>
<gene>
    <name type="primary">fbxo31-b</name>
</gene>
<keyword id="KW-0131">Cell cycle</keyword>
<keyword id="KW-0963">Cytoplasm</keyword>
<keyword id="KW-0227">DNA damage</keyword>
<keyword id="KW-0479">Metal-binding</keyword>
<keyword id="KW-1185">Reference proteome</keyword>
<keyword id="KW-0833">Ubl conjugation pathway</keyword>
<keyword id="KW-0862">Zinc</keyword>
<organism>
    <name type="scientific">Xenopus laevis</name>
    <name type="common">African clawed frog</name>
    <dbReference type="NCBI Taxonomy" id="8355"/>
    <lineage>
        <taxon>Eukaryota</taxon>
        <taxon>Metazoa</taxon>
        <taxon>Chordata</taxon>
        <taxon>Craniata</taxon>
        <taxon>Vertebrata</taxon>
        <taxon>Euteleostomi</taxon>
        <taxon>Amphibia</taxon>
        <taxon>Batrachia</taxon>
        <taxon>Anura</taxon>
        <taxon>Pipoidea</taxon>
        <taxon>Pipidae</taxon>
        <taxon>Xenopodinae</taxon>
        <taxon>Xenopus</taxon>
        <taxon>Xenopus</taxon>
    </lineage>
</organism>
<accession>A2BD94</accession>
<evidence type="ECO:0000250" key="1">
    <source>
        <dbReference type="UniProtKB" id="Q3TQF0"/>
    </source>
</evidence>
<evidence type="ECO:0000250" key="2">
    <source>
        <dbReference type="UniProtKB" id="Q5XUX0"/>
    </source>
</evidence>
<evidence type="ECO:0000255" key="3">
    <source>
        <dbReference type="PROSITE-ProRule" id="PRU00080"/>
    </source>
</evidence>
<evidence type="ECO:0000256" key="4">
    <source>
        <dbReference type="SAM" id="MobiDB-lite"/>
    </source>
</evidence>
<evidence type="ECO:0000305" key="5"/>
<dbReference type="EMBL" id="BC130117">
    <property type="protein sequence ID" value="AAI30118.1"/>
    <property type="molecule type" value="mRNA"/>
</dbReference>
<dbReference type="SMR" id="A2BD94"/>
<dbReference type="DNASU" id="100037076"/>
<dbReference type="GeneID" id="100037076"/>
<dbReference type="KEGG" id="xla:100037076"/>
<dbReference type="AGR" id="Xenbase:XB-GENE-6255522"/>
<dbReference type="CTD" id="100037076"/>
<dbReference type="Xenbase" id="XB-GENE-6255522">
    <property type="gene designation" value="fbxo31.L"/>
</dbReference>
<dbReference type="OrthoDB" id="722566at2759"/>
<dbReference type="UniPathway" id="UPA00143"/>
<dbReference type="Proteomes" id="UP000186698">
    <property type="component" value="Chromosome 4L"/>
</dbReference>
<dbReference type="Bgee" id="100037076">
    <property type="expression patterns" value="Expressed in heart and 19 other cell types or tissues"/>
</dbReference>
<dbReference type="GO" id="GO:0005737">
    <property type="term" value="C:cytoplasm"/>
    <property type="evidence" value="ECO:0000250"/>
    <property type="project" value="UniProtKB"/>
</dbReference>
<dbReference type="GO" id="GO:0019005">
    <property type="term" value="C:SCF ubiquitin ligase complex"/>
    <property type="evidence" value="ECO:0000250"/>
    <property type="project" value="UniProtKB"/>
</dbReference>
<dbReference type="GO" id="GO:1990756">
    <property type="term" value="F:ubiquitin-like ligase-substrate adaptor activity"/>
    <property type="evidence" value="ECO:0000250"/>
    <property type="project" value="UniProtKB"/>
</dbReference>
<dbReference type="GO" id="GO:0031145">
    <property type="term" value="P:anaphase-promoting complex-dependent catabolic process"/>
    <property type="evidence" value="ECO:0000250"/>
    <property type="project" value="UniProtKB"/>
</dbReference>
<dbReference type="GO" id="GO:0034599">
    <property type="term" value="P:cellular response to oxidative stress"/>
    <property type="evidence" value="ECO:0000250"/>
    <property type="project" value="UniProtKB"/>
</dbReference>
<dbReference type="GO" id="GO:0006974">
    <property type="term" value="P:DNA damage response"/>
    <property type="evidence" value="ECO:0000250"/>
    <property type="project" value="UniProtKB"/>
</dbReference>
<dbReference type="GO" id="GO:0031571">
    <property type="term" value="P:mitotic G1 DNA damage checkpoint signaling"/>
    <property type="evidence" value="ECO:0000250"/>
    <property type="project" value="UniProtKB"/>
</dbReference>
<dbReference type="GO" id="GO:0043161">
    <property type="term" value="P:proteasome-mediated ubiquitin-dependent protein catabolic process"/>
    <property type="evidence" value="ECO:0000250"/>
    <property type="project" value="UniProtKB"/>
</dbReference>
<dbReference type="GO" id="GO:0016567">
    <property type="term" value="P:protein ubiquitination"/>
    <property type="evidence" value="ECO:0007669"/>
    <property type="project" value="UniProtKB-UniPathway"/>
</dbReference>
<dbReference type="GO" id="GO:0031146">
    <property type="term" value="P:SCF-dependent proteasomal ubiquitin-dependent protein catabolic process"/>
    <property type="evidence" value="ECO:0000250"/>
    <property type="project" value="UniProtKB"/>
</dbReference>
<dbReference type="CDD" id="cd22102">
    <property type="entry name" value="F-box_FBXO31"/>
    <property type="match status" value="1"/>
</dbReference>
<dbReference type="FunFam" id="1.20.1280.50:FF:000033">
    <property type="entry name" value="F-box only protein 31"/>
    <property type="match status" value="1"/>
</dbReference>
<dbReference type="Gene3D" id="1.20.1280.50">
    <property type="match status" value="1"/>
</dbReference>
<dbReference type="InterPro" id="IPR036047">
    <property type="entry name" value="F-box-like_dom_sf"/>
</dbReference>
<dbReference type="InterPro" id="IPR001810">
    <property type="entry name" value="F-box_dom"/>
</dbReference>
<dbReference type="InterPro" id="IPR045048">
    <property type="entry name" value="FBXO31/39"/>
</dbReference>
<dbReference type="PANTHER" id="PTHR10706">
    <property type="entry name" value="F-BOX FAMILY PROTEIN"/>
    <property type="match status" value="1"/>
</dbReference>
<dbReference type="PANTHER" id="PTHR10706:SF130">
    <property type="entry name" value="F-BOX ONLY PROTEIN 31"/>
    <property type="match status" value="1"/>
</dbReference>
<dbReference type="Pfam" id="PF12014">
    <property type="entry name" value="Cyclin_D1_bind"/>
    <property type="match status" value="1"/>
</dbReference>
<dbReference type="Pfam" id="PF12937">
    <property type="entry name" value="F-box-like"/>
    <property type="match status" value="1"/>
</dbReference>
<dbReference type="SMART" id="SM00256">
    <property type="entry name" value="FBOX"/>
    <property type="match status" value="1"/>
</dbReference>
<dbReference type="SUPFAM" id="SSF81383">
    <property type="entry name" value="F-box domain"/>
    <property type="match status" value="1"/>
</dbReference>
<dbReference type="PROSITE" id="PS50181">
    <property type="entry name" value="FBOX"/>
    <property type="match status" value="1"/>
</dbReference>
<reference key="1">
    <citation type="submission" date="2006-12" db="EMBL/GenBank/DDBJ databases">
        <authorList>
            <consortium name="NIH - Xenopus Gene Collection (XGC) project"/>
        </authorList>
    </citation>
    <scope>NUCLEOTIDE SEQUENCE [LARGE SCALE MRNA]</scope>
    <source>
        <tissue>Embryo</tissue>
    </source>
</reference>
<sequence length="523" mass="59954">MAVCARLCGVGQSGGCRRRRQRKGAGNDPELEDEEEEDEVRIEAEVLVEGQAAVAPLRPRSLLQLPPEILVEIFSSLPGTELPSLAQVCRKFRQILTTDTIWKRRCKQEYGVCENLRKLEVTGVSCHDVYVKLLHQYRHILGLWQPDIGPYGGLLNVVVDGLFIIGWMYLPPHDPHVDEGMRLKPVFRIHLMERNNATVECMYGHKGPHNGQIQIVKKDEFSTKCLQTDYHRMSGGRQEEFRTWLREDLGRTLEDIFHEHMQELILMKFIYICQYDKCLTYRRIYHPPNRPDDLLNPGFFKGTYGSHGLEIVMFSFHGTIAKATKITGDPNVPAGQQTLEVDLTRPVQLPDVEHLRNFDEISRLILDVQSQIQREQRQTGNEEDDGKGAGPDRAEHSQQPAPVHRPAKEDVNGVDNADDREQKPPNVQSFVLPAGVMARNEEYPRSCKMCFYGTGLIAGHGFSSPERTPGLFILFDEDRFGFIWLELKSFSLYSRMRDRFQHSEAPSLEAFDEMLQHMQSWTT</sequence>